<accession>P43933</accession>
<feature type="chain" id="PRO_0000077881" description="Probable protein adenylyltransferase MntA">
    <location>
        <begin position="1"/>
        <end position="114"/>
    </location>
</feature>
<feature type="short sequence motif" description="GSX(10)DXD motif" evidence="2">
    <location>
        <begin position="34"/>
        <end position="48"/>
    </location>
</feature>
<feature type="active site" evidence="1">
    <location>
        <position position="46"/>
    </location>
</feature>
<feature type="active site" evidence="1">
    <location>
        <position position="48"/>
    </location>
</feature>
<feature type="binding site" description="in chain B" evidence="6 8">
    <location>
        <position position="46"/>
    </location>
    <ligand>
        <name>Mg(2+)</name>
        <dbReference type="ChEBI" id="CHEBI:18420"/>
        <label>1</label>
        <note>ligand shared between homodimeric partners</note>
    </ligand>
</feature>
<feature type="binding site" description="in chain B" evidence="6 8">
    <location>
        <position position="46"/>
    </location>
    <ligand>
        <name>Mg(2+)</name>
        <dbReference type="ChEBI" id="CHEBI:18420"/>
        <label>2</label>
        <note>ligand shared between homodimeric partners</note>
    </ligand>
</feature>
<feature type="binding site" description="in chain B" evidence="6 8">
    <location>
        <position position="48"/>
    </location>
    <ligand>
        <name>Mg(2+)</name>
        <dbReference type="ChEBI" id="CHEBI:18420"/>
        <label>1</label>
        <note>ligand shared between homodimeric partners</note>
    </ligand>
</feature>
<feature type="binding site" description="in chain B" evidence="6 8">
    <location>
        <position position="48"/>
    </location>
    <ligand>
        <name>Mg(2+)</name>
        <dbReference type="ChEBI" id="CHEBI:18420"/>
        <label>2</label>
        <note>ligand shared between homodimeric partners</note>
    </ligand>
</feature>
<feature type="binding site" description="in chain A" evidence="6 8">
    <location>
        <position position="67"/>
    </location>
    <ligand>
        <name>Mg(2+)</name>
        <dbReference type="ChEBI" id="CHEBI:18420"/>
        <label>1</label>
        <note>ligand shared between homodimeric partners</note>
    </ligand>
</feature>
<feature type="binding site" description="in chain A" evidence="6 8">
    <location>
        <position position="67"/>
    </location>
    <ligand>
        <name>Mg(2+)</name>
        <dbReference type="ChEBI" id="CHEBI:18420"/>
        <label>2</label>
        <note>ligand shared between homodimeric partners</note>
    </ligand>
</feature>
<feature type="binding site" description="in chain A" evidence="6 8">
    <location>
        <position position="71"/>
    </location>
    <ligand>
        <name>Mg(2+)</name>
        <dbReference type="ChEBI" id="CHEBI:18420"/>
        <label>1</label>
        <note>ligand shared between homodimeric partners</note>
    </ligand>
</feature>
<feature type="binding site" description="in chain B" evidence="6 8">
    <location>
        <position position="79"/>
    </location>
    <ligand>
        <name>Mg(2+)</name>
        <dbReference type="ChEBI" id="CHEBI:18420"/>
        <label>2</label>
        <note>ligand shared between homodimeric partners</note>
    </ligand>
</feature>
<feature type="helix" evidence="9">
    <location>
        <begin position="11"/>
        <end position="24"/>
    </location>
</feature>
<feature type="strand" evidence="9">
    <location>
        <begin position="28"/>
        <end position="33"/>
    </location>
</feature>
<feature type="helix" evidence="9">
    <location>
        <begin position="34"/>
        <end position="36"/>
    </location>
</feature>
<feature type="turn" evidence="9">
    <location>
        <begin position="37"/>
        <end position="39"/>
    </location>
</feature>
<feature type="strand" evidence="9">
    <location>
        <begin position="47"/>
        <end position="52"/>
    </location>
</feature>
<feature type="helix" evidence="9">
    <location>
        <begin position="59"/>
        <end position="71"/>
    </location>
</feature>
<feature type="strand" evidence="9">
    <location>
        <begin position="78"/>
        <end position="82"/>
    </location>
</feature>
<feature type="helix" evidence="9">
    <location>
        <begin position="83"/>
        <end position="85"/>
    </location>
</feature>
<feature type="helix" evidence="9">
    <location>
        <begin position="88"/>
        <end position="96"/>
    </location>
</feature>
<feature type="strand" evidence="9">
    <location>
        <begin position="99"/>
        <end position="102"/>
    </location>
</feature>
<proteinExistence type="evidence at protein level"/>
<gene>
    <name type="primary">mntA</name>
    <name type="ordered locus">HI_0073</name>
</gene>
<reference key="1">
    <citation type="journal article" date="1995" name="Science">
        <title>Whole-genome random sequencing and assembly of Haemophilus influenzae Rd.</title>
        <authorList>
            <person name="Fleischmann R.D."/>
            <person name="Adams M.D."/>
            <person name="White O."/>
            <person name="Clayton R.A."/>
            <person name="Kirkness E.F."/>
            <person name="Kerlavage A.R."/>
            <person name="Bult C.J."/>
            <person name="Tomb J.-F."/>
            <person name="Dougherty B.A."/>
            <person name="Merrick J.M."/>
            <person name="McKenney K."/>
            <person name="Sutton G.G."/>
            <person name="FitzHugh W."/>
            <person name="Fields C.A."/>
            <person name="Gocayne J.D."/>
            <person name="Scott J.D."/>
            <person name="Shirley R."/>
            <person name="Liu L.-I."/>
            <person name="Glodek A."/>
            <person name="Kelley J.M."/>
            <person name="Weidman J.F."/>
            <person name="Phillips C.A."/>
            <person name="Spriggs T."/>
            <person name="Hedblom E."/>
            <person name="Cotton M.D."/>
            <person name="Utterback T.R."/>
            <person name="Hanna M.C."/>
            <person name="Nguyen D.T."/>
            <person name="Saudek D.M."/>
            <person name="Brandon R.C."/>
            <person name="Fine L.D."/>
            <person name="Fritchman J.L."/>
            <person name="Fuhrmann J.L."/>
            <person name="Geoghagen N.S.M."/>
            <person name="Gnehm C.L."/>
            <person name="McDonald L.A."/>
            <person name="Small K.V."/>
            <person name="Fraser C.M."/>
            <person name="Smith H.O."/>
            <person name="Venter J.C."/>
        </authorList>
    </citation>
    <scope>NUCLEOTIDE SEQUENCE [LARGE SCALE GENOMIC DNA]</scope>
    <source>
        <strain>ATCC 51907 / DSM 11121 / KW20 / Rd</strain>
    </source>
</reference>
<reference key="2">
    <citation type="journal article" date="2003" name="Proteins">
        <title>The HI0073/HI0074 protein pair from Haemophilus influenzae is a member of a new nucleotidyltransferase family: structure, sequence analyses, and solution studies.</title>
        <authorList>
            <person name="Lehmann C."/>
            <person name="Lim K."/>
            <person name="Chalamasetty V.R."/>
            <person name="Krajewski W."/>
            <person name="Melamud E."/>
            <person name="Galkin A."/>
            <person name="Howard A."/>
            <person name="Kelman Z."/>
            <person name="Reddy P.T."/>
            <person name="Murzin A.G."/>
            <person name="Herzberg O."/>
        </authorList>
    </citation>
    <scope>SUBUNIT</scope>
    <source>
        <strain>ATCC 51907 / DSM 11121 / KW20 / Rd</strain>
    </source>
</reference>
<reference key="3">
    <citation type="journal article" date="2018" name="J. Biol. Chem.">
        <title>Structure-function analyses reveal the molecular architecture and neutralization mechanism of a bacterial HEPN-MNT toxin-antitoxin system.</title>
        <authorList>
            <person name="Jia X."/>
            <person name="Yao J."/>
            <person name="Gao Z."/>
            <person name="Liu G."/>
            <person name="Dong Y.H."/>
            <person name="Wang X."/>
            <person name="Zhang H."/>
        </authorList>
    </citation>
    <scope>POSSIBLE FUNCTION</scope>
</reference>
<reference evidence="8" key="4">
    <citation type="journal article" date="2005" name="Proteins">
        <title>Structure of HI0073 from Haemophilus influenzae, the nucleotide-binding domain of a two-protein nucleotidyl transferase.</title>
        <authorList>
            <person name="Lehmann C."/>
            <person name="Pullalarevu S."/>
            <person name="Krajewski W."/>
            <person name="Willis M.A."/>
            <person name="Galkin A."/>
            <person name="Howard A."/>
            <person name="Herzberg O."/>
        </authorList>
    </citation>
    <scope>X-RAY CRYSTALLOGRAPHY (1.80 ANGSTROMS) IN COMPLEX WITH ZINC</scope>
    <scope>POSSIBLE NUCLEOTIDE-BINDING</scope>
    <scope>COFACTOR</scope>
    <source>
        <strain>ATCC 51907 / DSM 11121 / KW20 / Rd</strain>
    </source>
</reference>
<sequence>MTSFAQLDIKSEELAIVKTILQQLVPDYTVWAFGSRVKGKAKKYSDLDLAIISEEPLDFLARDRLKEAFSESDLPWRVDLLDWATTSEDFREIIRKVYVVIQEKEKTVEKPTAL</sequence>
<dbReference type="EC" id="2.7.7.108" evidence="1"/>
<dbReference type="EMBL" id="L42023">
    <property type="protein sequence ID" value="AAC21758.1"/>
    <property type="molecule type" value="Genomic_DNA"/>
</dbReference>
<dbReference type="PIR" id="E64000">
    <property type="entry name" value="E64000"/>
</dbReference>
<dbReference type="RefSeq" id="NP_438246.1">
    <property type="nucleotide sequence ID" value="NC_000907.1"/>
</dbReference>
<dbReference type="PDB" id="1NO5">
    <property type="method" value="X-ray"/>
    <property type="resolution" value="1.80 A"/>
    <property type="chains" value="A/B=1-114"/>
</dbReference>
<dbReference type="PDBsum" id="1NO5"/>
<dbReference type="SMR" id="P43933"/>
<dbReference type="STRING" id="71421.HI_0073"/>
<dbReference type="REBASE" id="191853">
    <property type="entry name" value="S1.Apa1447ORF2799P"/>
</dbReference>
<dbReference type="REBASE" id="191857">
    <property type="entry name" value="S1.Apa1447ORF3031P"/>
</dbReference>
<dbReference type="REBASE" id="191869">
    <property type="entry name" value="S1.Apa1342ORF2943P"/>
</dbReference>
<dbReference type="REBASE" id="191874">
    <property type="entry name" value="S2.Apa1342ORF3157P"/>
</dbReference>
<dbReference type="EnsemblBacteria" id="AAC21758">
    <property type="protein sequence ID" value="AAC21758"/>
    <property type="gene ID" value="HI_0073"/>
</dbReference>
<dbReference type="KEGG" id="hin:HI_0073"/>
<dbReference type="PATRIC" id="fig|71421.8.peg.74"/>
<dbReference type="eggNOG" id="COG1708">
    <property type="taxonomic scope" value="Bacteria"/>
</dbReference>
<dbReference type="HOGENOM" id="CLU_130257_5_2_6"/>
<dbReference type="OrthoDB" id="9808659at2"/>
<dbReference type="PhylomeDB" id="P43933"/>
<dbReference type="BioCyc" id="HINF71421:G1GJ1-74-MONOMER"/>
<dbReference type="EvolutionaryTrace" id="P43933"/>
<dbReference type="Proteomes" id="UP000000579">
    <property type="component" value="Chromosome"/>
</dbReference>
<dbReference type="GO" id="GO:0005524">
    <property type="term" value="F:ATP binding"/>
    <property type="evidence" value="ECO:0007669"/>
    <property type="project" value="UniProtKB-KW"/>
</dbReference>
<dbReference type="GO" id="GO:0046872">
    <property type="term" value="F:metal ion binding"/>
    <property type="evidence" value="ECO:0007669"/>
    <property type="project" value="UniProtKB-KW"/>
</dbReference>
<dbReference type="GO" id="GO:0016779">
    <property type="term" value="F:nucleotidyltransferase activity"/>
    <property type="evidence" value="ECO:0007669"/>
    <property type="project" value="UniProtKB-KW"/>
</dbReference>
<dbReference type="CDD" id="cd05403">
    <property type="entry name" value="NT_KNTase_like"/>
    <property type="match status" value="1"/>
</dbReference>
<dbReference type="Gene3D" id="3.30.460.10">
    <property type="entry name" value="Beta Polymerase, domain 2"/>
    <property type="match status" value="1"/>
</dbReference>
<dbReference type="InterPro" id="IPR043519">
    <property type="entry name" value="NT_sf"/>
</dbReference>
<dbReference type="InterPro" id="IPR002934">
    <property type="entry name" value="Polymerase_NTP_transf_dom"/>
</dbReference>
<dbReference type="InterPro" id="IPR052548">
    <property type="entry name" value="Type_VII_TA_antitoxin"/>
</dbReference>
<dbReference type="PANTHER" id="PTHR33933">
    <property type="entry name" value="NUCLEOTIDYLTRANSFERASE"/>
    <property type="match status" value="1"/>
</dbReference>
<dbReference type="PANTHER" id="PTHR33933:SF1">
    <property type="entry name" value="PROTEIN ADENYLYLTRANSFERASE MNTA-RELATED"/>
    <property type="match status" value="1"/>
</dbReference>
<dbReference type="Pfam" id="PF01909">
    <property type="entry name" value="NTP_transf_2"/>
    <property type="match status" value="1"/>
</dbReference>
<dbReference type="SUPFAM" id="SSF81301">
    <property type="entry name" value="Nucleotidyltransferase"/>
    <property type="match status" value="1"/>
</dbReference>
<evidence type="ECO:0000250" key="1">
    <source>
        <dbReference type="UniProtKB" id="A0A0B0QJN8"/>
    </source>
</evidence>
<evidence type="ECO:0000250" key="2">
    <source>
        <dbReference type="UniProtKB" id="Q8ECH7"/>
    </source>
</evidence>
<evidence type="ECO:0000269" key="3">
    <source>
    </source>
</evidence>
<evidence type="ECO:0000269" key="4">
    <source>
    </source>
</evidence>
<evidence type="ECO:0000305" key="5"/>
<evidence type="ECO:0000305" key="6">
    <source>
    </source>
</evidence>
<evidence type="ECO:0000305" key="7">
    <source>
    </source>
</evidence>
<evidence type="ECO:0007744" key="8">
    <source>
        <dbReference type="PDB" id="1NO5"/>
    </source>
</evidence>
<evidence type="ECO:0007829" key="9">
    <source>
        <dbReference type="PDB" id="1NO5"/>
    </source>
</evidence>
<name>MNTA_HAEIN</name>
<protein>
    <recommendedName>
        <fullName>Probable protein adenylyltransferase MntA</fullName>
        <ecNumber evidence="1">2.7.7.108</ecNumber>
    </recommendedName>
    <alternativeName>
        <fullName>Probable antitoxin MntA</fullName>
    </alternativeName>
</protein>
<comment type="function">
    <text evidence="4 7">Probable antitoxin component of a type VII toxin-antitoxin (TA) system. Neutralizes cognate toxic HEPN probably by di-AMPylation (Probable). A mixture of HepT and MntA binds nucleotides; the highest affinity is for TTP, ATP binds more tightly than ADP or AMP (PubMed:16028221).</text>
</comment>
<comment type="catalytic activity">
    <reaction evidence="1">
        <text>L-tyrosyl-[protein] + ATP = O-(5'-adenylyl)-L-tyrosyl-[protein] + diphosphate</text>
        <dbReference type="Rhea" id="RHEA:54288"/>
        <dbReference type="Rhea" id="RHEA-COMP:10136"/>
        <dbReference type="Rhea" id="RHEA-COMP:13846"/>
        <dbReference type="ChEBI" id="CHEBI:30616"/>
        <dbReference type="ChEBI" id="CHEBI:33019"/>
        <dbReference type="ChEBI" id="CHEBI:46858"/>
        <dbReference type="ChEBI" id="CHEBI:83624"/>
        <dbReference type="EC" id="2.7.7.108"/>
    </reaction>
</comment>
<comment type="catalytic activity">
    <reaction evidence="1">
        <text>O-(5'-adenylyl)-L-tyrosyl-[protein] + ATP = O-[5'-(adenylyl-(5'-&gt;3')-adenylyl)]-L-tyrosyl-[protein] + diphosphate</text>
        <dbReference type="Rhea" id="RHEA:66528"/>
        <dbReference type="Rhea" id="RHEA-COMP:13846"/>
        <dbReference type="Rhea" id="RHEA-COMP:17046"/>
        <dbReference type="ChEBI" id="CHEBI:30616"/>
        <dbReference type="ChEBI" id="CHEBI:33019"/>
        <dbReference type="ChEBI" id="CHEBI:83624"/>
        <dbReference type="ChEBI" id="CHEBI:167160"/>
    </reaction>
</comment>
<comment type="cofactor">
    <cofactor evidence="6">
        <name>Mg(2+)</name>
        <dbReference type="ChEBI" id="CHEBI:18420"/>
    </cofactor>
    <text evidence="6">Binds 2 divalent metal cations, probably Mg(2+) in vivo, Zn(2+) ions are found in the crystal structure.</text>
</comment>
<comment type="subunit">
    <text evidence="3">Forms a complex with HepT, probably with a stoichiometry of 2:2.</text>
</comment>
<comment type="similarity">
    <text evidence="5">Belongs to the MntA antitoxin family.</text>
</comment>
<keyword id="KW-0002">3D-structure</keyword>
<keyword id="KW-0067">ATP-binding</keyword>
<keyword id="KW-0460">Magnesium</keyword>
<keyword id="KW-0479">Metal-binding</keyword>
<keyword id="KW-0547">Nucleotide-binding</keyword>
<keyword id="KW-0548">Nucleotidyltransferase</keyword>
<keyword id="KW-1185">Reference proteome</keyword>
<keyword id="KW-1277">Toxin-antitoxin system</keyword>
<keyword id="KW-0808">Transferase</keyword>
<organism>
    <name type="scientific">Haemophilus influenzae (strain ATCC 51907 / DSM 11121 / KW20 / Rd)</name>
    <dbReference type="NCBI Taxonomy" id="71421"/>
    <lineage>
        <taxon>Bacteria</taxon>
        <taxon>Pseudomonadati</taxon>
        <taxon>Pseudomonadota</taxon>
        <taxon>Gammaproteobacteria</taxon>
        <taxon>Pasteurellales</taxon>
        <taxon>Pasteurellaceae</taxon>
        <taxon>Haemophilus</taxon>
    </lineage>
</organism>